<accession>Q8NJ57</accession>
<accession>B9W7Q0</accession>
<comment type="function">
    <text evidence="2">Catalyzes the introduction of a C-5 double bond in the B ring of ergosterol. May contribute to the regulation of ergosterol biosynthesis.</text>
</comment>
<comment type="catalytic activity">
    <reaction evidence="2">
        <text>a Delta(7)-sterol + 2 Fe(II)-[cytochrome b5] + O2 + 2 H(+) = a Delta(5),Delta(7)-sterol + 2 Fe(III)-[cytochrome b5] + 2 H2O</text>
        <dbReference type="Rhea" id="RHEA:54320"/>
        <dbReference type="Rhea" id="RHEA-COMP:10438"/>
        <dbReference type="Rhea" id="RHEA-COMP:10439"/>
        <dbReference type="ChEBI" id="CHEBI:15377"/>
        <dbReference type="ChEBI" id="CHEBI:15378"/>
        <dbReference type="ChEBI" id="CHEBI:15379"/>
        <dbReference type="ChEBI" id="CHEBI:29033"/>
        <dbReference type="ChEBI" id="CHEBI:29034"/>
        <dbReference type="ChEBI" id="CHEBI:138130"/>
        <dbReference type="ChEBI" id="CHEBI:138131"/>
        <dbReference type="EC" id="1.14.19.20"/>
    </reaction>
</comment>
<comment type="cofactor">
    <cofactor evidence="1">
        <name>Fe cation</name>
        <dbReference type="ChEBI" id="CHEBI:24875"/>
    </cofactor>
</comment>
<comment type="pathway">
    <text>Steroid metabolism; ergosterol biosynthesis; ergosterol from zymosterol: step 3/5.</text>
</comment>
<comment type="subcellular location">
    <subcellularLocation>
        <location evidence="4">Endoplasmic reticulum membrane</location>
        <topology evidence="4">Multi-pass membrane protein</topology>
    </subcellularLocation>
</comment>
<comment type="domain">
    <text>The histidine box domains may contain the active site and/or be involved in metal ion binding.</text>
</comment>
<comment type="similarity">
    <text evidence="4">Belongs to the sterol desaturase family.</text>
</comment>
<proteinExistence type="inferred from homology"/>
<feature type="chain" id="PRO_0000117021" description="Delta(7)-sterol 5(6)-desaturase">
    <location>
        <begin position="1"/>
        <end position="386"/>
    </location>
</feature>
<feature type="transmembrane region" description="Helical" evidence="3">
    <location>
        <begin position="119"/>
        <end position="139"/>
    </location>
</feature>
<feature type="transmembrane region" description="Helical" evidence="3">
    <location>
        <begin position="172"/>
        <end position="192"/>
    </location>
</feature>
<feature type="transmembrane region" description="Helical" evidence="3">
    <location>
        <begin position="206"/>
        <end position="226"/>
    </location>
</feature>
<feature type="transmembrane region" description="Helical" evidence="3">
    <location>
        <begin position="272"/>
        <end position="292"/>
    </location>
</feature>
<feature type="domain" description="Fatty acid hydroxylase" evidence="3">
    <location>
        <begin position="214"/>
        <end position="337"/>
    </location>
</feature>
<feature type="short sequence motif" description="Histidine box-1">
    <location>
        <begin position="226"/>
        <end position="230"/>
    </location>
</feature>
<feature type="short sequence motif" description="Histidine box-2">
    <location>
        <begin position="239"/>
        <end position="243"/>
    </location>
</feature>
<feature type="short sequence motif" description="Histidine box-3">
    <location>
        <begin position="314"/>
        <end position="318"/>
    </location>
</feature>
<evidence type="ECO:0000250" key="1"/>
<evidence type="ECO:0000250" key="2">
    <source>
        <dbReference type="UniProtKB" id="P32353"/>
    </source>
</evidence>
<evidence type="ECO:0000255" key="3"/>
<evidence type="ECO:0000305" key="4"/>
<gene>
    <name type="primary">ERG3</name>
    <name type="ORF">CD36_04520</name>
</gene>
<name>ERG3_CANDC</name>
<dbReference type="EC" id="1.14.19.20"/>
<dbReference type="EMBL" id="AJ421248">
    <property type="protein sequence ID" value="CAD13131.1"/>
    <property type="molecule type" value="Genomic_DNA"/>
</dbReference>
<dbReference type="EMBL" id="FM992688">
    <property type="protein sequence ID" value="CAX44711.1"/>
    <property type="molecule type" value="Genomic_DNA"/>
</dbReference>
<dbReference type="RefSeq" id="XP_002417121.1">
    <property type="nucleotide sequence ID" value="XM_002417076.1"/>
</dbReference>
<dbReference type="GeneID" id="8044658"/>
<dbReference type="KEGG" id="cdu:CD36_04520"/>
<dbReference type="CGD" id="CAL0000162230">
    <property type="gene designation" value="ERG3"/>
</dbReference>
<dbReference type="VEuPathDB" id="FungiDB:CD36_04520"/>
<dbReference type="eggNOG" id="KOG0872">
    <property type="taxonomic scope" value="Eukaryota"/>
</dbReference>
<dbReference type="HOGENOM" id="CLU_047036_3_0_1"/>
<dbReference type="OrthoDB" id="6354873at2759"/>
<dbReference type="UniPathway" id="UPA00768">
    <property type="reaction ID" value="UER00762"/>
</dbReference>
<dbReference type="Proteomes" id="UP000002605">
    <property type="component" value="Chromosome 1"/>
</dbReference>
<dbReference type="GO" id="GO:0005789">
    <property type="term" value="C:endoplasmic reticulum membrane"/>
    <property type="evidence" value="ECO:0007669"/>
    <property type="project" value="UniProtKB-SubCell"/>
</dbReference>
<dbReference type="GO" id="GO:0050046">
    <property type="term" value="F:delta7-sterol 5(6)-desaturase activity"/>
    <property type="evidence" value="ECO:0007669"/>
    <property type="project" value="UniProtKB-EC"/>
</dbReference>
<dbReference type="GO" id="GO:0005506">
    <property type="term" value="F:iron ion binding"/>
    <property type="evidence" value="ECO:0007669"/>
    <property type="project" value="InterPro"/>
</dbReference>
<dbReference type="GO" id="GO:0016126">
    <property type="term" value="P:sterol biosynthetic process"/>
    <property type="evidence" value="ECO:0007669"/>
    <property type="project" value="UniProtKB-UniPathway"/>
</dbReference>
<dbReference type="InterPro" id="IPR006694">
    <property type="entry name" value="Fatty_acid_hydroxylase"/>
</dbReference>
<dbReference type="InterPro" id="IPR050307">
    <property type="entry name" value="Sterol_Desaturase_Related"/>
</dbReference>
<dbReference type="PANTHER" id="PTHR11863">
    <property type="entry name" value="STEROL DESATURASE"/>
    <property type="match status" value="1"/>
</dbReference>
<dbReference type="Pfam" id="PF04116">
    <property type="entry name" value="FA_hydroxylase"/>
    <property type="match status" value="1"/>
</dbReference>
<keyword id="KW-0256">Endoplasmic reticulum</keyword>
<keyword id="KW-0408">Iron</keyword>
<keyword id="KW-0444">Lipid biosynthesis</keyword>
<keyword id="KW-0443">Lipid metabolism</keyword>
<keyword id="KW-0472">Membrane</keyword>
<keyword id="KW-0560">Oxidoreductase</keyword>
<keyword id="KW-0752">Steroid biosynthesis</keyword>
<keyword id="KW-0753">Steroid metabolism</keyword>
<keyword id="KW-0756">Sterol biosynthesis</keyword>
<keyword id="KW-1207">Sterol metabolism</keyword>
<keyword id="KW-0812">Transmembrane</keyword>
<keyword id="KW-1133">Transmembrane helix</keyword>
<protein>
    <recommendedName>
        <fullName>Delta(7)-sterol 5(6)-desaturase</fullName>
        <ecNumber>1.14.19.20</ecNumber>
    </recommendedName>
    <alternativeName>
        <fullName>C-5 sterol desaturase</fullName>
    </alternativeName>
    <alternativeName>
        <fullName>Ergosterol Delta(5,6) desaturase</fullName>
    </alternativeName>
    <alternativeName>
        <fullName>Sterol-C5-desaturase</fullName>
    </alternativeName>
</protein>
<sequence>MDIVLEICDYYLFDKVYADVFPKDGPVHEYLKPAIQSFSEINFPKLQNWDSFDTNSTLISSNNFNISNVNPATIPGYLLSKIASYQDKSEIYGLAPKFFPATEFIDTSFLSRSNIFREVLSLFIITTLFGWLLYFIVAYLSYVFVFDKKIFNHPRYLKNQMSLEIKRATSAIPVMVLLTIPFFLLELHGYSFLYEEINESTGGYKAILWQIPKFILFTDCGIYFLHRWLHWPSVYKALHKPHHKWIVCTPFASHAFHPVDGFFQSLPYHLYPLLFPLHKVLYLLLFTFVNFWTVMIHDGSYWSNDPVVNGTACHTVHHLYFNYNYGQFTTLWDRLGNSYRRPDDSLFVKDQKKEEEKKIWKEQTRQMEEIRGEVEGKVDDREYIDQ</sequence>
<reference key="1">
    <citation type="journal article" date="2003" name="Antimicrob. Agents Chemother.">
        <title>Molecular mechanisms of itraconazole resistance in Candida dubliniensis.</title>
        <authorList>
            <person name="Pinjon E."/>
            <person name="Moran G."/>
            <person name="Jackson C.J."/>
            <person name="Kelly S.L."/>
            <person name="Sanglard D."/>
            <person name="Coleman D."/>
            <person name="Suulivan D.J."/>
        </authorList>
    </citation>
    <scope>NUCLEOTIDE SEQUENCE [GENOMIC DNA]</scope>
</reference>
<reference key="2">
    <citation type="journal article" date="2009" name="Genome Res.">
        <title>Comparative genomics of the fungal pathogens Candida dubliniensis and Candida albicans.</title>
        <authorList>
            <person name="Jackson A.P."/>
            <person name="Gamble J.A."/>
            <person name="Yeomans T."/>
            <person name="Moran G.P."/>
            <person name="Saunders D."/>
            <person name="Harris D."/>
            <person name="Aslett M."/>
            <person name="Barrell J.F."/>
            <person name="Butler G."/>
            <person name="Citiulo F."/>
            <person name="Coleman D.C."/>
            <person name="de Groot P.W.J."/>
            <person name="Goodwin T.J."/>
            <person name="Quail M.A."/>
            <person name="McQuillan J."/>
            <person name="Munro C.A."/>
            <person name="Pain A."/>
            <person name="Poulter R.T."/>
            <person name="Rajandream M.A."/>
            <person name="Renauld H."/>
            <person name="Spiering M.J."/>
            <person name="Tivey A."/>
            <person name="Gow N.A.R."/>
            <person name="Barrell B."/>
            <person name="Sullivan D.J."/>
            <person name="Berriman M."/>
        </authorList>
    </citation>
    <scope>NUCLEOTIDE SEQUENCE [LARGE SCALE GENOMIC DNA]</scope>
    <source>
        <strain>CD36 / ATCC MYA-646 / CBS 7987 / NCPF 3949 / NRRL Y-17841</strain>
    </source>
</reference>
<organism>
    <name type="scientific">Candida dubliniensis (strain CD36 / ATCC MYA-646 / CBS 7987 / NCPF 3949 / NRRL Y-17841)</name>
    <name type="common">Yeast</name>
    <dbReference type="NCBI Taxonomy" id="573826"/>
    <lineage>
        <taxon>Eukaryota</taxon>
        <taxon>Fungi</taxon>
        <taxon>Dikarya</taxon>
        <taxon>Ascomycota</taxon>
        <taxon>Saccharomycotina</taxon>
        <taxon>Pichiomycetes</taxon>
        <taxon>Debaryomycetaceae</taxon>
        <taxon>Candida/Lodderomyces clade</taxon>
        <taxon>Candida</taxon>
    </lineage>
</organism>